<sequence>MSKSDIIEMQGTVLEALPNAMFEVELESGHKILAHISGKLRMNFIRILPGDKVTVELSPYDLTRGRITWRAK</sequence>
<dbReference type="EMBL" id="CP000246">
    <property type="protein sequence ID" value="ABG83727.1"/>
    <property type="molecule type" value="Genomic_DNA"/>
</dbReference>
<dbReference type="RefSeq" id="WP_003454491.1">
    <property type="nucleotide sequence ID" value="NC_008261.1"/>
</dbReference>
<dbReference type="SMR" id="Q0TMS0"/>
<dbReference type="STRING" id="195103.CPF_2690"/>
<dbReference type="PaxDb" id="195103-CPF_2690"/>
<dbReference type="GeneID" id="93001033"/>
<dbReference type="KEGG" id="cpf:CPF_2690"/>
<dbReference type="eggNOG" id="COG0361">
    <property type="taxonomic scope" value="Bacteria"/>
</dbReference>
<dbReference type="HOGENOM" id="CLU_151267_1_0_9"/>
<dbReference type="Proteomes" id="UP000001823">
    <property type="component" value="Chromosome"/>
</dbReference>
<dbReference type="GO" id="GO:0005829">
    <property type="term" value="C:cytosol"/>
    <property type="evidence" value="ECO:0007669"/>
    <property type="project" value="TreeGrafter"/>
</dbReference>
<dbReference type="GO" id="GO:0043022">
    <property type="term" value="F:ribosome binding"/>
    <property type="evidence" value="ECO:0007669"/>
    <property type="project" value="UniProtKB-UniRule"/>
</dbReference>
<dbReference type="GO" id="GO:0019843">
    <property type="term" value="F:rRNA binding"/>
    <property type="evidence" value="ECO:0007669"/>
    <property type="project" value="UniProtKB-UniRule"/>
</dbReference>
<dbReference type="GO" id="GO:0003743">
    <property type="term" value="F:translation initiation factor activity"/>
    <property type="evidence" value="ECO:0007669"/>
    <property type="project" value="UniProtKB-UniRule"/>
</dbReference>
<dbReference type="CDD" id="cd04451">
    <property type="entry name" value="S1_IF1"/>
    <property type="match status" value="1"/>
</dbReference>
<dbReference type="FunFam" id="2.40.50.140:FF:000002">
    <property type="entry name" value="Translation initiation factor IF-1"/>
    <property type="match status" value="1"/>
</dbReference>
<dbReference type="Gene3D" id="2.40.50.140">
    <property type="entry name" value="Nucleic acid-binding proteins"/>
    <property type="match status" value="1"/>
</dbReference>
<dbReference type="HAMAP" id="MF_00075">
    <property type="entry name" value="IF_1"/>
    <property type="match status" value="1"/>
</dbReference>
<dbReference type="InterPro" id="IPR012340">
    <property type="entry name" value="NA-bd_OB-fold"/>
</dbReference>
<dbReference type="InterPro" id="IPR006196">
    <property type="entry name" value="RNA-binding_domain_S1_IF1"/>
</dbReference>
<dbReference type="InterPro" id="IPR003029">
    <property type="entry name" value="S1_domain"/>
</dbReference>
<dbReference type="InterPro" id="IPR004368">
    <property type="entry name" value="TIF_IF1"/>
</dbReference>
<dbReference type="NCBIfam" id="TIGR00008">
    <property type="entry name" value="infA"/>
    <property type="match status" value="1"/>
</dbReference>
<dbReference type="PANTHER" id="PTHR33370">
    <property type="entry name" value="TRANSLATION INITIATION FACTOR IF-1, CHLOROPLASTIC"/>
    <property type="match status" value="1"/>
</dbReference>
<dbReference type="PANTHER" id="PTHR33370:SF1">
    <property type="entry name" value="TRANSLATION INITIATION FACTOR IF-1, CHLOROPLASTIC"/>
    <property type="match status" value="1"/>
</dbReference>
<dbReference type="Pfam" id="PF01176">
    <property type="entry name" value="eIF-1a"/>
    <property type="match status" value="1"/>
</dbReference>
<dbReference type="SMART" id="SM00316">
    <property type="entry name" value="S1"/>
    <property type="match status" value="1"/>
</dbReference>
<dbReference type="SUPFAM" id="SSF50249">
    <property type="entry name" value="Nucleic acid-binding proteins"/>
    <property type="match status" value="1"/>
</dbReference>
<dbReference type="PROSITE" id="PS50832">
    <property type="entry name" value="S1_IF1_TYPE"/>
    <property type="match status" value="1"/>
</dbReference>
<organism>
    <name type="scientific">Clostridium perfringens (strain ATCC 13124 / DSM 756 / JCM 1290 / NCIMB 6125 / NCTC 8237 / Type A)</name>
    <dbReference type="NCBI Taxonomy" id="195103"/>
    <lineage>
        <taxon>Bacteria</taxon>
        <taxon>Bacillati</taxon>
        <taxon>Bacillota</taxon>
        <taxon>Clostridia</taxon>
        <taxon>Eubacteriales</taxon>
        <taxon>Clostridiaceae</taxon>
        <taxon>Clostridium</taxon>
    </lineage>
</organism>
<comment type="function">
    <text evidence="1">One of the essential components for the initiation of protein synthesis. Stabilizes the binding of IF-2 and IF-3 on the 30S subunit to which N-formylmethionyl-tRNA(fMet) subsequently binds. Helps modulate mRNA selection, yielding the 30S pre-initiation complex (PIC). Upon addition of the 50S ribosomal subunit IF-1, IF-2 and IF-3 are released leaving the mature 70S translation initiation complex.</text>
</comment>
<comment type="subunit">
    <text evidence="1">Component of the 30S ribosomal translation pre-initiation complex which assembles on the 30S ribosome in the order IF-2 and IF-3, IF-1 and N-formylmethionyl-tRNA(fMet); mRNA recruitment can occur at any time during PIC assembly.</text>
</comment>
<comment type="subcellular location">
    <subcellularLocation>
        <location evidence="1">Cytoplasm</location>
    </subcellularLocation>
</comment>
<comment type="similarity">
    <text evidence="1">Belongs to the IF-1 family.</text>
</comment>
<feature type="chain" id="PRO_0000263786" description="Translation initiation factor IF-1">
    <location>
        <begin position="1"/>
        <end position="72"/>
    </location>
</feature>
<feature type="domain" description="S1-like" evidence="1">
    <location>
        <begin position="1"/>
        <end position="72"/>
    </location>
</feature>
<protein>
    <recommendedName>
        <fullName evidence="1">Translation initiation factor IF-1</fullName>
    </recommendedName>
</protein>
<evidence type="ECO:0000255" key="1">
    <source>
        <dbReference type="HAMAP-Rule" id="MF_00075"/>
    </source>
</evidence>
<proteinExistence type="inferred from homology"/>
<name>IF1_CLOP1</name>
<gene>
    <name evidence="1" type="primary">infA</name>
    <name type="ordered locus">CPF_2690</name>
</gene>
<reference key="1">
    <citation type="journal article" date="2006" name="Genome Res.">
        <title>Skewed genomic variability in strains of the toxigenic bacterial pathogen, Clostridium perfringens.</title>
        <authorList>
            <person name="Myers G.S.A."/>
            <person name="Rasko D.A."/>
            <person name="Cheung J.K."/>
            <person name="Ravel J."/>
            <person name="Seshadri R."/>
            <person name="DeBoy R.T."/>
            <person name="Ren Q."/>
            <person name="Varga J."/>
            <person name="Awad M.M."/>
            <person name="Brinkac L.M."/>
            <person name="Daugherty S.C."/>
            <person name="Haft D.H."/>
            <person name="Dodson R.J."/>
            <person name="Madupu R."/>
            <person name="Nelson W.C."/>
            <person name="Rosovitz M.J."/>
            <person name="Sullivan S.A."/>
            <person name="Khouri H."/>
            <person name="Dimitrov G.I."/>
            <person name="Watkins K.L."/>
            <person name="Mulligan S."/>
            <person name="Benton J."/>
            <person name="Radune D."/>
            <person name="Fisher D.J."/>
            <person name="Atkins H.S."/>
            <person name="Hiscox T."/>
            <person name="Jost B.H."/>
            <person name="Billington S.J."/>
            <person name="Songer J.G."/>
            <person name="McClane B.A."/>
            <person name="Titball R.W."/>
            <person name="Rood J.I."/>
            <person name="Melville S.B."/>
            <person name="Paulsen I.T."/>
        </authorList>
    </citation>
    <scope>NUCLEOTIDE SEQUENCE [LARGE SCALE GENOMIC DNA]</scope>
    <source>
        <strain>ATCC 13124 / DSM 756 / JCM 1290 / NCIMB 6125 / NCTC 8237 / S 107 / Type A</strain>
    </source>
</reference>
<keyword id="KW-0963">Cytoplasm</keyword>
<keyword id="KW-0396">Initiation factor</keyword>
<keyword id="KW-0648">Protein biosynthesis</keyword>
<keyword id="KW-0694">RNA-binding</keyword>
<keyword id="KW-0699">rRNA-binding</keyword>
<accession>Q0TMS0</accession>